<keyword id="KW-0028">Amino-acid biosynthesis</keyword>
<keyword id="KW-0100">Branched-chain amino acid biosynthesis</keyword>
<keyword id="KW-0963">Cytoplasm</keyword>
<keyword id="KW-0432">Leucine biosynthesis</keyword>
<keyword id="KW-0464">Manganese</keyword>
<keyword id="KW-0479">Metal-binding</keyword>
<keyword id="KW-0808">Transferase</keyword>
<feature type="chain" id="PRO_1000149162" description="2-isopropylmalate synthase">
    <location>
        <begin position="1"/>
        <end position="511"/>
    </location>
</feature>
<feature type="domain" description="Pyruvate carboxyltransferase" evidence="1">
    <location>
        <begin position="6"/>
        <end position="269"/>
    </location>
</feature>
<feature type="region of interest" description="Regulatory domain" evidence="1">
    <location>
        <begin position="394"/>
        <end position="511"/>
    </location>
</feature>
<feature type="binding site" evidence="1">
    <location>
        <position position="15"/>
    </location>
    <ligand>
        <name>Mn(2+)</name>
        <dbReference type="ChEBI" id="CHEBI:29035"/>
    </ligand>
</feature>
<feature type="binding site" evidence="1">
    <location>
        <position position="203"/>
    </location>
    <ligand>
        <name>Mn(2+)</name>
        <dbReference type="ChEBI" id="CHEBI:29035"/>
    </ligand>
</feature>
<feature type="binding site" evidence="1">
    <location>
        <position position="205"/>
    </location>
    <ligand>
        <name>Mn(2+)</name>
        <dbReference type="ChEBI" id="CHEBI:29035"/>
    </ligand>
</feature>
<feature type="binding site" evidence="1">
    <location>
        <position position="239"/>
    </location>
    <ligand>
        <name>Mn(2+)</name>
        <dbReference type="ChEBI" id="CHEBI:29035"/>
    </ligand>
</feature>
<name>LEU1_CAMJD</name>
<proteinExistence type="inferred from homology"/>
<protein>
    <recommendedName>
        <fullName evidence="1">2-isopropylmalate synthase</fullName>
        <ecNumber evidence="1">2.3.3.13</ecNumber>
    </recommendedName>
    <alternativeName>
        <fullName evidence="1">Alpha-IPM synthase</fullName>
    </alternativeName>
    <alternativeName>
        <fullName evidence="1">Alpha-isopropylmalate synthase</fullName>
    </alternativeName>
</protein>
<organism>
    <name type="scientific">Campylobacter jejuni subsp. doylei (strain ATCC BAA-1458 / RM4099 / 269.97)</name>
    <dbReference type="NCBI Taxonomy" id="360109"/>
    <lineage>
        <taxon>Bacteria</taxon>
        <taxon>Pseudomonadati</taxon>
        <taxon>Campylobacterota</taxon>
        <taxon>Epsilonproteobacteria</taxon>
        <taxon>Campylobacterales</taxon>
        <taxon>Campylobacteraceae</taxon>
        <taxon>Campylobacter</taxon>
    </lineage>
</organism>
<reference key="1">
    <citation type="submission" date="2007-07" db="EMBL/GenBank/DDBJ databases">
        <title>Complete genome sequence of Campylobacter jejuni subsp doylei 269.97 isolated from human blood.</title>
        <authorList>
            <person name="Fouts D.E."/>
            <person name="Mongodin E.F."/>
            <person name="Puiu D."/>
            <person name="Sebastian Y."/>
            <person name="Miller W.G."/>
            <person name="Mandrell R.E."/>
            <person name="Lastovica A.J."/>
            <person name="Nelson K.E."/>
        </authorList>
    </citation>
    <scope>NUCLEOTIDE SEQUENCE [LARGE SCALE GENOMIC DNA]</scope>
    <source>
        <strain>ATCC BAA-1458 / RM4099 / 269.97</strain>
    </source>
</reference>
<evidence type="ECO:0000255" key="1">
    <source>
        <dbReference type="HAMAP-Rule" id="MF_01025"/>
    </source>
</evidence>
<sequence length="511" mass="56304">MKNNKIIIFDTTLRDGEQALGSSLGINQKLQIALALENLGVDVIEAGFPVSSQGDFKAVQKIASKVKNSTICALSRALDKDIDMAYEALKVAKHFRIHTFIATSTLHIQDKLKKDFDEILSMAKRAIIRARSYTDDVEFSCEDAGRTPIDNLCFMVENAIKAGAKTINIPDTVGYTLPSEFANIIKILFNKVPNIDKAIISVHCHNDLGMATGNSLSAILQGARQIECTINGLGERAGNCALEEVVMAIKTRKDYLQGFYTDIKCENISKTSKLVSAITNESIPSHKAIVGSNAFSHSSGIHQDGVLKNRQTYEIISPSAIGIHENRMLMTARSGRAMIKTCLENLGYDENTYNLDDVYERFLRLADKKGQVYDYDLEALMFLSYESEEENEFVLEKLSVISGNIPTACVCMRIKEELKTEACTGNGPVEAVFNCIARITNLKPVLKAYSINAKSSGVDAQGQVDVDLEFKGRKFHGKGLSTDVIEASAQAFVSAYNAIYRSLKVEERKMA</sequence>
<dbReference type="EC" id="2.3.3.13" evidence="1"/>
<dbReference type="EMBL" id="CP000768">
    <property type="protein sequence ID" value="ABS43502.1"/>
    <property type="molecule type" value="Genomic_DNA"/>
</dbReference>
<dbReference type="SMR" id="A7H667"/>
<dbReference type="KEGG" id="cjd:JJD26997_2096"/>
<dbReference type="HOGENOM" id="CLU_022158_0_1_7"/>
<dbReference type="UniPathway" id="UPA00048">
    <property type="reaction ID" value="UER00070"/>
</dbReference>
<dbReference type="Proteomes" id="UP000002302">
    <property type="component" value="Chromosome"/>
</dbReference>
<dbReference type="GO" id="GO:0005829">
    <property type="term" value="C:cytosol"/>
    <property type="evidence" value="ECO:0007669"/>
    <property type="project" value="TreeGrafter"/>
</dbReference>
<dbReference type="GO" id="GO:0003852">
    <property type="term" value="F:2-isopropylmalate synthase activity"/>
    <property type="evidence" value="ECO:0007669"/>
    <property type="project" value="UniProtKB-UniRule"/>
</dbReference>
<dbReference type="GO" id="GO:0003985">
    <property type="term" value="F:acetyl-CoA C-acetyltransferase activity"/>
    <property type="evidence" value="ECO:0007669"/>
    <property type="project" value="UniProtKB-UniRule"/>
</dbReference>
<dbReference type="GO" id="GO:0030145">
    <property type="term" value="F:manganese ion binding"/>
    <property type="evidence" value="ECO:0007669"/>
    <property type="project" value="UniProtKB-UniRule"/>
</dbReference>
<dbReference type="GO" id="GO:0009098">
    <property type="term" value="P:L-leucine biosynthetic process"/>
    <property type="evidence" value="ECO:0007669"/>
    <property type="project" value="UniProtKB-UniRule"/>
</dbReference>
<dbReference type="CDD" id="cd07940">
    <property type="entry name" value="DRE_TIM_IPMS"/>
    <property type="match status" value="1"/>
</dbReference>
<dbReference type="FunFam" id="1.10.238.260:FF:000001">
    <property type="entry name" value="2-isopropylmalate synthase"/>
    <property type="match status" value="1"/>
</dbReference>
<dbReference type="FunFam" id="3.20.20.70:FF:000010">
    <property type="entry name" value="2-isopropylmalate synthase"/>
    <property type="match status" value="1"/>
</dbReference>
<dbReference type="Gene3D" id="1.10.238.260">
    <property type="match status" value="1"/>
</dbReference>
<dbReference type="Gene3D" id="3.30.160.270">
    <property type="match status" value="1"/>
</dbReference>
<dbReference type="Gene3D" id="3.20.20.70">
    <property type="entry name" value="Aldolase class I"/>
    <property type="match status" value="1"/>
</dbReference>
<dbReference type="HAMAP" id="MF_01025">
    <property type="entry name" value="LeuA_type1"/>
    <property type="match status" value="1"/>
</dbReference>
<dbReference type="InterPro" id="IPR050073">
    <property type="entry name" value="2-IPM_HCS-like"/>
</dbReference>
<dbReference type="InterPro" id="IPR013709">
    <property type="entry name" value="2-isopropylmalate_synth_dimer"/>
</dbReference>
<dbReference type="InterPro" id="IPR002034">
    <property type="entry name" value="AIPM/Hcit_synth_CS"/>
</dbReference>
<dbReference type="InterPro" id="IPR013785">
    <property type="entry name" value="Aldolase_TIM"/>
</dbReference>
<dbReference type="InterPro" id="IPR054691">
    <property type="entry name" value="LeuA/HCS_post-cat"/>
</dbReference>
<dbReference type="InterPro" id="IPR036230">
    <property type="entry name" value="LeuA_allosteric_dom_sf"/>
</dbReference>
<dbReference type="InterPro" id="IPR005671">
    <property type="entry name" value="LeuA_bact_synth"/>
</dbReference>
<dbReference type="InterPro" id="IPR000891">
    <property type="entry name" value="PYR_CT"/>
</dbReference>
<dbReference type="NCBIfam" id="TIGR00973">
    <property type="entry name" value="leuA_bact"/>
    <property type="match status" value="1"/>
</dbReference>
<dbReference type="NCBIfam" id="NF002084">
    <property type="entry name" value="PRK00915.1-1"/>
    <property type="match status" value="1"/>
</dbReference>
<dbReference type="NCBIfam" id="NF002086">
    <property type="entry name" value="PRK00915.1-3"/>
    <property type="match status" value="1"/>
</dbReference>
<dbReference type="PANTHER" id="PTHR10277:SF9">
    <property type="entry name" value="2-ISOPROPYLMALATE SYNTHASE 1, CHLOROPLASTIC-RELATED"/>
    <property type="match status" value="1"/>
</dbReference>
<dbReference type="PANTHER" id="PTHR10277">
    <property type="entry name" value="HOMOCITRATE SYNTHASE-RELATED"/>
    <property type="match status" value="1"/>
</dbReference>
<dbReference type="Pfam" id="PF22617">
    <property type="entry name" value="HCS_D2"/>
    <property type="match status" value="1"/>
</dbReference>
<dbReference type="Pfam" id="PF00682">
    <property type="entry name" value="HMGL-like"/>
    <property type="match status" value="1"/>
</dbReference>
<dbReference type="Pfam" id="PF08502">
    <property type="entry name" value="LeuA_dimer"/>
    <property type="match status" value="1"/>
</dbReference>
<dbReference type="SMART" id="SM00917">
    <property type="entry name" value="LeuA_dimer"/>
    <property type="match status" value="1"/>
</dbReference>
<dbReference type="SUPFAM" id="SSF110921">
    <property type="entry name" value="2-isopropylmalate synthase LeuA, allosteric (dimerisation) domain"/>
    <property type="match status" value="1"/>
</dbReference>
<dbReference type="SUPFAM" id="SSF51569">
    <property type="entry name" value="Aldolase"/>
    <property type="match status" value="1"/>
</dbReference>
<dbReference type="PROSITE" id="PS00815">
    <property type="entry name" value="AIPM_HOMOCIT_SYNTH_1"/>
    <property type="match status" value="1"/>
</dbReference>
<dbReference type="PROSITE" id="PS00816">
    <property type="entry name" value="AIPM_HOMOCIT_SYNTH_2"/>
    <property type="match status" value="1"/>
</dbReference>
<dbReference type="PROSITE" id="PS50991">
    <property type="entry name" value="PYR_CT"/>
    <property type="match status" value="1"/>
</dbReference>
<gene>
    <name evidence="1" type="primary">leuA</name>
    <name type="ordered locus">JJD26997_2096</name>
</gene>
<comment type="function">
    <text evidence="1">Catalyzes the condensation of the acetyl group of acetyl-CoA with 3-methyl-2-oxobutanoate (2-ketoisovalerate) to form 3-carboxy-3-hydroxy-4-methylpentanoate (2-isopropylmalate).</text>
</comment>
<comment type="catalytic activity">
    <reaction evidence="1">
        <text>3-methyl-2-oxobutanoate + acetyl-CoA + H2O = (2S)-2-isopropylmalate + CoA + H(+)</text>
        <dbReference type="Rhea" id="RHEA:21524"/>
        <dbReference type="ChEBI" id="CHEBI:1178"/>
        <dbReference type="ChEBI" id="CHEBI:11851"/>
        <dbReference type="ChEBI" id="CHEBI:15377"/>
        <dbReference type="ChEBI" id="CHEBI:15378"/>
        <dbReference type="ChEBI" id="CHEBI:57287"/>
        <dbReference type="ChEBI" id="CHEBI:57288"/>
        <dbReference type="EC" id="2.3.3.13"/>
    </reaction>
</comment>
<comment type="cofactor">
    <cofactor evidence="1">
        <name>Mn(2+)</name>
        <dbReference type="ChEBI" id="CHEBI:29035"/>
    </cofactor>
</comment>
<comment type="pathway">
    <text evidence="1">Amino-acid biosynthesis; L-leucine biosynthesis; L-leucine from 3-methyl-2-oxobutanoate: step 1/4.</text>
</comment>
<comment type="subunit">
    <text evidence="1">Homodimer.</text>
</comment>
<comment type="subcellular location">
    <subcellularLocation>
        <location evidence="1">Cytoplasm</location>
    </subcellularLocation>
</comment>
<comment type="similarity">
    <text evidence="1">Belongs to the alpha-IPM synthase/homocitrate synthase family. LeuA type 1 subfamily.</text>
</comment>
<accession>A7H667</accession>